<dbReference type="EMBL" id="L20587">
    <property type="protein sequence ID" value="AAA99878.1"/>
    <property type="molecule type" value="Genomic_RNA"/>
</dbReference>
<dbReference type="SMR" id="Q77372"/>
<dbReference type="PRO" id="PR:Q77372"/>
<dbReference type="Proteomes" id="UP000007689">
    <property type="component" value="Segment"/>
</dbReference>
<dbReference type="GO" id="GO:0042025">
    <property type="term" value="C:host cell nucleus"/>
    <property type="evidence" value="ECO:0007669"/>
    <property type="project" value="UniProtKB-SubCell"/>
</dbReference>
<dbReference type="GO" id="GO:0020002">
    <property type="term" value="C:host cell plasma membrane"/>
    <property type="evidence" value="ECO:0007669"/>
    <property type="project" value="UniProtKB-SubCell"/>
</dbReference>
<dbReference type="GO" id="GO:0072494">
    <property type="term" value="C:host multivesicular body"/>
    <property type="evidence" value="ECO:0007669"/>
    <property type="project" value="UniProtKB-SubCell"/>
</dbReference>
<dbReference type="GO" id="GO:0016020">
    <property type="term" value="C:membrane"/>
    <property type="evidence" value="ECO:0007669"/>
    <property type="project" value="UniProtKB-KW"/>
</dbReference>
<dbReference type="GO" id="GO:0019013">
    <property type="term" value="C:viral nucleocapsid"/>
    <property type="evidence" value="ECO:0007669"/>
    <property type="project" value="UniProtKB-KW"/>
</dbReference>
<dbReference type="GO" id="GO:0055036">
    <property type="term" value="C:virion membrane"/>
    <property type="evidence" value="ECO:0007669"/>
    <property type="project" value="UniProtKB-SubCell"/>
</dbReference>
<dbReference type="GO" id="GO:0003723">
    <property type="term" value="F:RNA binding"/>
    <property type="evidence" value="ECO:0007669"/>
    <property type="project" value="UniProtKB-KW"/>
</dbReference>
<dbReference type="GO" id="GO:0005198">
    <property type="term" value="F:structural molecule activity"/>
    <property type="evidence" value="ECO:0007669"/>
    <property type="project" value="InterPro"/>
</dbReference>
<dbReference type="GO" id="GO:0008270">
    <property type="term" value="F:zinc ion binding"/>
    <property type="evidence" value="ECO:0007669"/>
    <property type="project" value="UniProtKB-KW"/>
</dbReference>
<dbReference type="GO" id="GO:0039702">
    <property type="term" value="P:viral budding via host ESCRT complex"/>
    <property type="evidence" value="ECO:0007669"/>
    <property type="project" value="UniProtKB-KW"/>
</dbReference>
<dbReference type="GO" id="GO:0075523">
    <property type="term" value="P:viral translational frameshifting"/>
    <property type="evidence" value="ECO:0007669"/>
    <property type="project" value="UniProtKB-KW"/>
</dbReference>
<dbReference type="FunFam" id="1.10.1200.30:FF:000001">
    <property type="entry name" value="Gag polyprotein"/>
    <property type="match status" value="1"/>
</dbReference>
<dbReference type="Gene3D" id="1.10.1200.30">
    <property type="match status" value="1"/>
</dbReference>
<dbReference type="Gene3D" id="6.10.250.390">
    <property type="match status" value="1"/>
</dbReference>
<dbReference type="Gene3D" id="1.10.375.10">
    <property type="entry name" value="Human Immunodeficiency Virus Type 1 Capsid Protein"/>
    <property type="match status" value="1"/>
</dbReference>
<dbReference type="Gene3D" id="1.10.150.90">
    <property type="entry name" value="Immunodeficiency lentiviruses, gag gene matrix protein p17"/>
    <property type="match status" value="1"/>
</dbReference>
<dbReference type="Gene3D" id="1.20.5.760">
    <property type="entry name" value="Single helix bin"/>
    <property type="match status" value="1"/>
</dbReference>
<dbReference type="Gene3D" id="4.10.60.10">
    <property type="entry name" value="Zinc finger, CCHC-type"/>
    <property type="match status" value="1"/>
</dbReference>
<dbReference type="InterPro" id="IPR045345">
    <property type="entry name" value="Gag_p24_C"/>
</dbReference>
<dbReference type="InterPro" id="IPR000071">
    <property type="entry name" value="Lentvrl_matrix_N"/>
</dbReference>
<dbReference type="InterPro" id="IPR012344">
    <property type="entry name" value="Matrix_HIV/RSV_N"/>
</dbReference>
<dbReference type="InterPro" id="IPR050195">
    <property type="entry name" value="Primate_lentivir_Gag_pol-like"/>
</dbReference>
<dbReference type="InterPro" id="IPR008916">
    <property type="entry name" value="Retrov_capsid_C"/>
</dbReference>
<dbReference type="InterPro" id="IPR008919">
    <property type="entry name" value="Retrov_capsid_N"/>
</dbReference>
<dbReference type="InterPro" id="IPR010999">
    <property type="entry name" value="Retrovr_matrix"/>
</dbReference>
<dbReference type="InterPro" id="IPR001878">
    <property type="entry name" value="Znf_CCHC"/>
</dbReference>
<dbReference type="InterPro" id="IPR036875">
    <property type="entry name" value="Znf_CCHC_sf"/>
</dbReference>
<dbReference type="PANTHER" id="PTHR40389">
    <property type="entry name" value="ENDOGENOUS RETROVIRUS GROUP K MEMBER 24 GAG POLYPROTEIN-RELATED"/>
    <property type="match status" value="1"/>
</dbReference>
<dbReference type="PANTHER" id="PTHR40389:SF3">
    <property type="entry name" value="IGE-BINDING PROTEIN"/>
    <property type="match status" value="1"/>
</dbReference>
<dbReference type="Pfam" id="PF00540">
    <property type="entry name" value="Gag_p17"/>
    <property type="match status" value="1"/>
</dbReference>
<dbReference type="Pfam" id="PF00607">
    <property type="entry name" value="Gag_p24"/>
    <property type="match status" value="1"/>
</dbReference>
<dbReference type="Pfam" id="PF19317">
    <property type="entry name" value="Gag_p24_C"/>
    <property type="match status" value="1"/>
</dbReference>
<dbReference type="Pfam" id="PF00098">
    <property type="entry name" value="zf-CCHC"/>
    <property type="match status" value="2"/>
</dbReference>
<dbReference type="PRINTS" id="PR00234">
    <property type="entry name" value="HIV1MATRIX"/>
</dbReference>
<dbReference type="SMART" id="SM00343">
    <property type="entry name" value="ZnF_C2HC"/>
    <property type="match status" value="2"/>
</dbReference>
<dbReference type="SUPFAM" id="SSF47836">
    <property type="entry name" value="Retroviral matrix proteins"/>
    <property type="match status" value="1"/>
</dbReference>
<dbReference type="SUPFAM" id="SSF47353">
    <property type="entry name" value="Retrovirus capsid dimerization domain-like"/>
    <property type="match status" value="1"/>
</dbReference>
<dbReference type="SUPFAM" id="SSF47943">
    <property type="entry name" value="Retrovirus capsid protein, N-terminal core domain"/>
    <property type="match status" value="1"/>
</dbReference>
<dbReference type="SUPFAM" id="SSF57756">
    <property type="entry name" value="Retrovirus zinc finger-like domains"/>
    <property type="match status" value="1"/>
</dbReference>
<dbReference type="PROSITE" id="PS50158">
    <property type="entry name" value="ZF_CCHC"/>
    <property type="match status" value="2"/>
</dbReference>
<organismHost>
    <name type="scientific">Homo sapiens</name>
    <name type="common">Human</name>
    <dbReference type="NCBI Taxonomy" id="9606"/>
</organismHost>
<feature type="initiator methionine" description="Removed; by host" evidence="1">
    <location>
        <position position="1"/>
    </location>
</feature>
<feature type="chain" id="PRO_0000261207" description="Gag polyprotein">
    <location>
        <begin position="2"/>
        <end position="498"/>
    </location>
</feature>
<feature type="chain" id="PRO_0000246362" description="Matrix protein p17" evidence="1">
    <location>
        <begin position="2"/>
        <end position="130"/>
    </location>
</feature>
<feature type="chain" id="PRO_0000246363" description="Capsid protein p24" evidence="1">
    <location>
        <begin position="131"/>
        <end position="362"/>
    </location>
</feature>
<feature type="peptide" id="PRO_0000246364" description="Spacer peptide 1" evidence="1">
    <location>
        <begin position="363"/>
        <end position="381"/>
    </location>
</feature>
<feature type="chain" id="PRO_0000246365" description="Nucleocapsid protein p7" evidence="1">
    <location>
        <begin position="382"/>
        <end position="437"/>
    </location>
</feature>
<feature type="peptide" id="PRO_0000246366" description="Spacer peptide 2" evidence="1">
    <location>
        <begin position="438"/>
        <end position="453"/>
    </location>
</feature>
<feature type="chain" id="PRO_0000246367" description="p6-gag" evidence="1">
    <location>
        <begin position="454"/>
        <end position="498"/>
    </location>
</feature>
<feature type="zinc finger region" description="CCHC-type 1" evidence="8">
    <location>
        <begin position="394"/>
        <end position="411"/>
    </location>
</feature>
<feature type="zinc finger region" description="CCHC-type 2" evidence="8">
    <location>
        <begin position="415"/>
        <end position="432"/>
    </location>
</feature>
<feature type="region of interest" description="Interaction with Gp41" evidence="6">
    <location>
        <begin position="7"/>
        <end position="31"/>
    </location>
</feature>
<feature type="region of interest" description="Interaction with host CALM1" evidence="5">
    <location>
        <begin position="8"/>
        <end position="43"/>
    </location>
</feature>
<feature type="region of interest" description="Interaction with host AP3D1" evidence="7">
    <location>
        <begin position="12"/>
        <end position="19"/>
    </location>
</feature>
<feature type="region of interest" description="Interaction with membrane phosphatidylinositol 4,5-bisphosphate and RNA" evidence="6">
    <location>
        <begin position="14"/>
        <end position="33"/>
    </location>
</feature>
<feature type="region of interest" description="Interaction with membrane phosphatidylinositol 4,5-bisphosphate" evidence="6">
    <location>
        <begin position="73"/>
        <end position="77"/>
    </location>
</feature>
<feature type="region of interest" description="Interaction with host PPIA/CYPA and NUP153" evidence="6">
    <location>
        <begin position="187"/>
        <end position="225"/>
    </location>
</feature>
<feature type="region of interest" description="Disordered" evidence="9">
    <location>
        <begin position="212"/>
        <end position="232"/>
    </location>
</feature>
<feature type="region of interest" description="PPIA/CYPA-binding loop" evidence="5">
    <location>
        <begin position="215"/>
        <end position="223"/>
    </location>
</feature>
<feature type="region of interest" description="Dimerization/Multimerization of capsid protein p24" evidence="5">
    <location>
        <begin position="276"/>
        <end position="362"/>
    </location>
</feature>
<feature type="region of interest" description="Disordered" evidence="9">
    <location>
        <begin position="455"/>
        <end position="498"/>
    </location>
</feature>
<feature type="short sequence motif" description="Nuclear export signal" evidence="1">
    <location>
        <begin position="16"/>
        <end position="22"/>
    </location>
</feature>
<feature type="short sequence motif" description="Nuclear localization signal" evidence="1">
    <location>
        <begin position="26"/>
        <end position="32"/>
    </location>
</feature>
<feature type="short sequence motif" description="PTAP/PSAP motif">
    <location>
        <begin position="460"/>
        <end position="463"/>
    </location>
</feature>
<feature type="short sequence motif" description="LYPX(n)L motif">
    <location>
        <begin position="484"/>
        <end position="493"/>
    </location>
</feature>
<feature type="compositionally biased region" description="Basic and acidic residues" evidence="9">
    <location>
        <begin position="467"/>
        <end position="476"/>
    </location>
</feature>
<feature type="site" description="Cleavage; by viral protease" evidence="1">
    <location>
        <begin position="130"/>
        <end position="131"/>
    </location>
</feature>
<feature type="site" description="Cleavage; by viral protease" evidence="1">
    <location>
        <begin position="362"/>
        <end position="363"/>
    </location>
</feature>
<feature type="site" description="Cleavage; by viral protease" evidence="1">
    <location>
        <begin position="381"/>
        <end position="382"/>
    </location>
</feature>
<feature type="site" description="Cleavage; by viral protease" evidence="1">
    <location>
        <begin position="437"/>
        <end position="438"/>
    </location>
</feature>
<feature type="site" description="Cleavage; by viral protease" evidence="1">
    <location>
        <begin position="453"/>
        <end position="454"/>
    </location>
</feature>
<feature type="modified residue" description="Phosphoserine; by host MAPK1" evidence="6">
    <location>
        <position position="146"/>
    </location>
</feature>
<feature type="modified residue" description="Asymmetric dimethylarginine; in Nucleocapsid protein p7; by host PRMT6" evidence="1">
    <location>
        <position position="413"/>
    </location>
</feature>
<feature type="lipid moiety-binding region" description="N-myristoyl glycine; by host" evidence="1">
    <location>
        <position position="2"/>
    </location>
</feature>
<keyword id="KW-0014">AIDS</keyword>
<keyword id="KW-0167">Capsid protein</keyword>
<keyword id="KW-1032">Host cell membrane</keyword>
<keyword id="KW-1035">Host cytoplasm</keyword>
<keyword id="KW-1039">Host endosome</keyword>
<keyword id="KW-1043">Host membrane</keyword>
<keyword id="KW-1048">Host nucleus</keyword>
<keyword id="KW-0945">Host-virus interaction</keyword>
<keyword id="KW-0449">Lipoprotein</keyword>
<keyword id="KW-0472">Membrane</keyword>
<keyword id="KW-0479">Metal-binding</keyword>
<keyword id="KW-0488">Methylation</keyword>
<keyword id="KW-0519">Myristate</keyword>
<keyword id="KW-0597">Phosphoprotein</keyword>
<keyword id="KW-1185">Reference proteome</keyword>
<keyword id="KW-0677">Repeat</keyword>
<keyword id="KW-0688">Ribosomal frameshifting</keyword>
<keyword id="KW-0694">RNA-binding</keyword>
<keyword id="KW-1198">Viral budding</keyword>
<keyword id="KW-1187">Viral budding via the host ESCRT complexes</keyword>
<keyword id="KW-0543">Viral nucleoprotein</keyword>
<keyword id="KW-1188">Viral release from host cell</keyword>
<keyword id="KW-0946">Virion</keyword>
<keyword id="KW-0862">Zinc</keyword>
<keyword id="KW-0863">Zinc-finger</keyword>
<gene>
    <name type="primary">gag</name>
</gene>
<organism>
    <name type="scientific">Human immunodeficiency virus type 1 group O (isolate ANT70)</name>
    <name type="common">HIV-1</name>
    <dbReference type="NCBI Taxonomy" id="327105"/>
    <lineage>
        <taxon>Viruses</taxon>
        <taxon>Riboviria</taxon>
        <taxon>Pararnavirae</taxon>
        <taxon>Artverviricota</taxon>
        <taxon>Revtraviricetes</taxon>
        <taxon>Ortervirales</taxon>
        <taxon>Retroviridae</taxon>
        <taxon>Orthoretrovirinae</taxon>
        <taxon>Lentivirus</taxon>
        <taxon>Human immunodeficiency virus type 1</taxon>
    </lineage>
</organism>
<name>GAG_HV1AN</name>
<sequence length="498" mass="55304">MGASASVLTGSKLDAWEQIRLKPGSKKKYRLKHLVWASRELERFACNPELLETAEGNEKLLQQLEPALKTGSDSLQSLWNAIVVLWCVHNRYKIGDTQQAIQKLKEVMGSRKSADAAKEDTSARQAGQNYPIVSNAQGQMVHQAISPRTLNAWVKAVEEKAFNPEIIPMFMALSEGAISYDINTMLNAIGGHQGALQVLKEVINEEAVEWDRTHPPPVGPLPPGQIREPTGSDIAGTTSTQQEQIHWTTRPNQPIPVGDIYRKWIVLGLNKMVKMYSPVSILDIKQGPKEPFRDYVDRFYKTLRAEQATQEVKNWMTETLLVQNANPDCKQILKSLGPGATLEEMMVACQGVGGPTHKARVLAEAMATAQQDLKGGYTAVFMQRGQNPIRKGTIKCFNCGKEGHIARNCRAPRKKGCWKCGQEGHQMKDCRNGKQANFLGKYWPPGGTRPGNYVQRPAHPSAPPMEEEVKGQENQEQKGGPNELYPFASLKSLFGTDQ</sequence>
<proteinExistence type="inferred from homology"/>
<protein>
    <recommendedName>
        <fullName>Gag polyprotein</fullName>
    </recommendedName>
    <alternativeName>
        <fullName>Pr55Gag</fullName>
    </alternativeName>
    <component>
        <recommendedName>
            <fullName>Matrix protein p17</fullName>
            <shortName>MA</shortName>
        </recommendedName>
    </component>
    <component>
        <recommendedName>
            <fullName>Capsid protein p24</fullName>
            <shortName>CA</shortName>
        </recommendedName>
    </component>
    <component>
        <recommendedName>
            <fullName evidence="6">Spacer peptide 1</fullName>
            <shortName>SP1</shortName>
        </recommendedName>
        <alternativeName>
            <fullName>p2</fullName>
        </alternativeName>
    </component>
    <component>
        <recommendedName>
            <fullName>Nucleocapsid protein p7</fullName>
            <shortName>NC</shortName>
        </recommendedName>
    </component>
    <component>
        <recommendedName>
            <fullName evidence="6">Spacer peptide 2</fullName>
            <shortName>SP2</shortName>
        </recommendedName>
        <alternativeName>
            <fullName>p1</fullName>
        </alternativeName>
    </component>
    <component>
        <recommendedName>
            <fullName>p6-gag</fullName>
        </recommendedName>
    </component>
</protein>
<accession>Q77372</accession>
<evidence type="ECO:0000250" key="1"/>
<evidence type="ECO:0000250" key="2">
    <source>
        <dbReference type="UniProtKB" id="P03347"/>
    </source>
</evidence>
<evidence type="ECO:0000250" key="3">
    <source>
        <dbReference type="UniProtKB" id="P03348"/>
    </source>
</evidence>
<evidence type="ECO:0000250" key="4">
    <source>
        <dbReference type="UniProtKB" id="P03349"/>
    </source>
</evidence>
<evidence type="ECO:0000250" key="5">
    <source>
        <dbReference type="UniProtKB" id="P04591"/>
    </source>
</evidence>
<evidence type="ECO:0000250" key="6">
    <source>
        <dbReference type="UniProtKB" id="P12493"/>
    </source>
</evidence>
<evidence type="ECO:0000250" key="7">
    <source>
        <dbReference type="UniProtKB" id="P12497"/>
    </source>
</evidence>
<evidence type="ECO:0000255" key="8">
    <source>
        <dbReference type="PROSITE-ProRule" id="PRU00047"/>
    </source>
</evidence>
<evidence type="ECO:0000256" key="9">
    <source>
        <dbReference type="SAM" id="MobiDB-lite"/>
    </source>
</evidence>
<evidence type="ECO:0000305" key="10"/>
<reference key="1">
    <citation type="journal article" date="1994" name="J. Virol.">
        <title>Genomic cloning and complete sequence analysis of a highly divergent African human immunodeficiency virus isolate.</title>
        <authorList>
            <person name="Vanden Haesevelde M."/>
            <person name="Decourt J.L."/>
            <person name="De Leys R.J."/>
            <person name="Vanderborght B."/>
            <person name="van der Groen G."/>
            <person name="van Heuverswijn H."/>
            <person name="Saman E."/>
        </authorList>
    </citation>
    <scope>NUCLEOTIDE SEQUENCE [GENOMIC RNA]</scope>
</reference>
<comment type="function">
    <molecule>Gag polyprotein</molecule>
    <text evidence="5">Mediates, with Gag-Pol polyprotein, the essential events in virion assembly, including binding the plasma membrane, making the protein-protein interactions necessary to create spherical particles, recruiting the viral Env proteins, and packaging the genomic RNA via direct interactions with the RNA packaging sequence (Psi).</text>
</comment>
<comment type="function">
    <molecule>Matrix protein p17</molecule>
    <text evidence="1 6">Targets the polyprotein to the plasma membrane via a multipartite membrane-binding signal, that includes its myristoylated N-terminus (By similarity). Matrix protein is part of the pre-integration complex. Implicated in the release from host cell mediated by Vpu. Binds to RNA (By similarity).</text>
</comment>
<comment type="function">
    <molecule>Capsid protein p24</molecule>
    <text evidence="5 6">Forms the conical core that encapsulates the genomic RNA-nucleocapsid complex in the virion. Most core are conical, with only 7% tubular. The core is constituted by capsid protein hexamer subunits. The core is disassembled soon after virion entry (By similarity). The capsid promotes immune invasion by cloaking viral DNA from CGAS detection (By similarity). Host restriction factors such as TRIM5-alpha or TRIMCyp bind retroviral capsids and cause premature capsid disassembly, leading to blocks in reverse transcription. Capsid restriction by TRIM5 is one of the factors which restricts HIV-1 to the human species. Host PIN1 apparently facilitates the virion uncoating (By similarity). On the other hand, interactions with PDZD8 or CYPA stabilize the capsid (By similarity).</text>
</comment>
<comment type="function">
    <molecule>Nucleocapsid protein p7</molecule>
    <text evidence="5">Encapsulates and protects viral dimeric unspliced genomic RNA (gRNA). Binds these RNAs through its zinc fingers. Acts as a nucleic acid chaperone which is involved in rearangement of nucleic acid secondary structure during gRNA retrotranscription. Also facilitates template switch leading to recombination. As part of the polyprotein, participates in gRNA dimerization, packaging, tRNA incorporation and virion assembly.</text>
</comment>
<comment type="function">
    <molecule>p6-gag</molecule>
    <text evidence="6">Plays a role in budding of the assembled particle by interacting with the host class E VPS proteins TSG101 and PDCD6IP/AIP1.</text>
</comment>
<comment type="subunit">
    <molecule>Gag polyprotein</molecule>
    <text evidence="4 5">Homotrimer; further assembles as hexamers of trimers. Oligomerization possibly creates a central hole into which the cytoplasmic tail of the gp41 envelope protein may be inserted. Interacts with host TRIM22; this interaction seems to disrupt proper trafficking of Gag polyprotein and may interfere with budding. Interacts with host PDZD8. When ubiquitinated, interacts (via p6-gag domain) with host PACSIN2; this interaction allows PACSIN2 recruitment to viral assembly sites and its subsequent incorporation into virions. Interacts with MOV10 (By similarity).</text>
</comment>
<comment type="subunit">
    <molecule>Matrix protein p17</molecule>
    <text evidence="5 6">Homotrimer; further assembles as hexamers of trimers. Interacts with gp41 (via C-terminus). Interacts with host CALM1; this interaction induces a conformational change in the Matrix protein, triggering exposure of the myristate group. Interacts with host AP3D1; this interaction allows the polyprotein trafficking to multivesicular bodies during virus assembly. Part of the pre-integration complex (PIC) which is composed of viral genome, matrix protein, Vpr and integrase.</text>
</comment>
<comment type="subunit">
    <molecule>Capsid protein p24</molecule>
    <text evidence="5 6">Homodimer; the homodimer further multimerizes as homohexamers or homopentamers (By similarity). Interacts with host NUP98 (By similarity). Interacts with host PPIA/CYPA; this interaction stabilizes the capsid (By similarity). Interacts with host NUP153 (By similarity). Interacts with host PDZD8; this interaction stabilizes the capsid. Interacts with host TRIM5; this interaction destabilizes the capsid (By similarity). Interacts with host CPSF6 (By similarity). Interacts with host NONO; the interaction is weak (By similarity).</text>
</comment>
<comment type="subunit">
    <molecule>Nucleocapsid protein p7</molecule>
    <text evidence="6">Interacts with host NUP98.</text>
</comment>
<comment type="subunit">
    <molecule>p6-gag</molecule>
    <text evidence="3 6">Interacts with Vpr; this interaction allows Vpr incorporation into the virion. Interacts with host TSG101. p6-gag interacts with host PDCD6IP/AIP1.</text>
</comment>
<comment type="subcellular location">
    <molecule>Gag polyprotein</molecule>
    <subcellularLocation>
        <location evidence="6">Host cell membrane</location>
        <topology evidence="6">Lipid-anchor</topology>
    </subcellularLocation>
    <subcellularLocation>
        <location evidence="6">Host endosome</location>
        <location evidence="6">Host multivesicular body</location>
    </subcellularLocation>
    <text evidence="6">These locations are probably linked to virus assembly sites. The main location is the cell membrane, but under some circumstances, late endosomal compartments can serve as productive sites for virion assembly.</text>
</comment>
<comment type="subcellular location">
    <molecule>Matrix protein p17</molecule>
    <subcellularLocation>
        <location evidence="6">Virion membrane</location>
        <topology evidence="6">Lipid-anchor</topology>
    </subcellularLocation>
    <subcellularLocation>
        <location evidence="1">Host nucleus</location>
    </subcellularLocation>
    <subcellularLocation>
        <location evidence="1">Host cytoplasm</location>
    </subcellularLocation>
</comment>
<comment type="subcellular location">
    <molecule>Capsid protein p24</molecule>
    <subcellularLocation>
        <location evidence="6">Virion</location>
    </subcellularLocation>
</comment>
<comment type="subcellular location">
    <molecule>Nucleocapsid protein p7</molecule>
    <subcellularLocation>
        <location evidence="6">Virion</location>
    </subcellularLocation>
</comment>
<comment type="alternative products">
    <event type="ribosomal frameshifting"/>
    <isoform>
        <id>Q77372-1</id>
        <name>Gag polyprotein</name>
        <sequence type="displayed"/>
    </isoform>
    <isoform>
        <id>Q77373-1</id>
        <name>Gag-Pol polyprotein</name>
        <sequence type="external"/>
    </isoform>
    <text>Translation results in the formation of the Gag polyprotein most of the time. Ribosomal frameshifting at the gag-pol genes boundary occurs at low frequency and produces the Gag-Pol polyprotein. This strategy of translation probably allows the virus to modulate the quantity of each viral protein. Maintenance of a correct Gag to Gag-Pol ratio is essential for RNA dimerization and viral infectivity.</text>
</comment>
<comment type="domain">
    <text evidence="6">Late-budding domains (L domains) are short sequence motifs essential for viral particle budding. They recruit proteins of the host ESCRT machinery (Endosomal Sorting Complex Required for Transport) or ESCRT-associated proteins. p6-gag contains two L domains: a PTAP/PSAP motif, which interacts with the UEV domain of TSG101 and a LYPX(n)L motif which interacts with PDCD6IP/AIP1.</text>
</comment>
<comment type="PTM">
    <text evidence="6">Gag-Pol polyprotein: Specific enzymatic cleavages by the viral protease yield mature proteins.</text>
</comment>
<comment type="PTM">
    <molecule>Matrix protein p17</molecule>
    <text evidence="5">Tyrosine phosphorylated presumably in the virion by a host kinase. Phosphorylation is apparently not a major regulator of membrane association.</text>
</comment>
<comment type="PTM">
    <text evidence="6">Capsid protein p24 is phosphorylated possibly by host MAPK1; this phosphorylation is necessary for Pin1-mediated virion uncoating.</text>
</comment>
<comment type="PTM">
    <text evidence="2">Nucleocapsid protein p7 is methylated by host PRMT6, impairing its function by reducing RNA annealing and the initiation of reverse transcription.</text>
</comment>
<comment type="miscellaneous">
    <text>HIV-1 lineages are divided in three main groups, M (for Major), O (for Outlier), and N (for New, or Non-M, Non-O). The vast majority of strains found worldwide belong to the group M. Group O seems to be endemic to and largely confined to Cameroon and neighboring countries in West Central Africa, where these viruses represent a small minority of HIV-1 strains. The group N is represented by a limited number of isolates from Cameroonian persons. The group M is further subdivided in 9 clades or subtypes (A to D, F to H, J and K).</text>
</comment>
<comment type="miscellaneous">
    <molecule>Isoform Gag polyprotein</molecule>
    <text>Produced by conventional translation.</text>
</comment>
<comment type="similarity">
    <text evidence="10">Belongs to the primate lentivirus group gag polyprotein family.</text>
</comment>